<name>PGM1_MACFA</name>
<accession>Q4R5E4</accession>
<feature type="chain" id="PRO_0000147777" description="Phosphoglucomutase-1">
    <location>
        <begin position="1"/>
        <end position="562"/>
    </location>
</feature>
<feature type="active site" description="Phosphoserine intermediate" evidence="2">
    <location>
        <position position="117"/>
    </location>
</feature>
<feature type="binding site" evidence="2">
    <location>
        <position position="23"/>
    </location>
    <ligand>
        <name>alpha-D-glucose 1,6-bisphosphate</name>
        <dbReference type="ChEBI" id="CHEBI:58392"/>
    </ligand>
</feature>
<feature type="binding site" evidence="2">
    <location>
        <position position="117"/>
    </location>
    <ligand>
        <name>alpha-D-glucose 1,6-bisphosphate</name>
        <dbReference type="ChEBI" id="CHEBI:58392"/>
    </ligand>
</feature>
<feature type="binding site" description="via phosphate group" evidence="2">
    <location>
        <position position="117"/>
    </location>
    <ligand>
        <name>Mg(2+)</name>
        <dbReference type="ChEBI" id="CHEBI:18420"/>
    </ligand>
</feature>
<feature type="binding site" evidence="2">
    <location>
        <position position="288"/>
    </location>
    <ligand>
        <name>Mg(2+)</name>
        <dbReference type="ChEBI" id="CHEBI:18420"/>
    </ligand>
</feature>
<feature type="binding site" evidence="2">
    <location>
        <position position="290"/>
    </location>
    <ligand>
        <name>Mg(2+)</name>
        <dbReference type="ChEBI" id="CHEBI:18420"/>
    </ligand>
</feature>
<feature type="binding site" evidence="2">
    <location>
        <position position="292"/>
    </location>
    <ligand>
        <name>alpha-D-glucose 1,6-bisphosphate</name>
        <dbReference type="ChEBI" id="CHEBI:58392"/>
    </ligand>
</feature>
<feature type="binding site" evidence="2">
    <location>
        <position position="292"/>
    </location>
    <ligand>
        <name>Mg(2+)</name>
        <dbReference type="ChEBI" id="CHEBI:18420"/>
    </ligand>
</feature>
<feature type="binding site" evidence="2">
    <location>
        <position position="293"/>
    </location>
    <ligand>
        <name>alpha-D-glucose 1,6-bisphosphate</name>
        <dbReference type="ChEBI" id="CHEBI:58392"/>
    </ligand>
</feature>
<feature type="binding site" evidence="2">
    <location>
        <position position="357"/>
    </location>
    <ligand>
        <name>alpha-D-glucose 1,6-bisphosphate</name>
        <dbReference type="ChEBI" id="CHEBI:58392"/>
    </ligand>
</feature>
<feature type="binding site" evidence="2">
    <location>
        <position position="376"/>
    </location>
    <ligand>
        <name>alpha-D-glucose 1,6-bisphosphate</name>
        <dbReference type="ChEBI" id="CHEBI:58392"/>
    </ligand>
</feature>
<feature type="binding site" evidence="2">
    <location>
        <position position="378"/>
    </location>
    <ligand>
        <name>alpha-D-glucose 1,6-bisphosphate</name>
        <dbReference type="ChEBI" id="CHEBI:58392"/>
    </ligand>
</feature>
<feature type="binding site" evidence="2">
    <location>
        <position position="389"/>
    </location>
    <ligand>
        <name>alpha-D-glucose 1,6-bisphosphate</name>
        <dbReference type="ChEBI" id="CHEBI:58392"/>
    </ligand>
</feature>
<feature type="modified residue" description="N-acetylmethionine" evidence="3">
    <location>
        <position position="1"/>
    </location>
</feature>
<feature type="modified residue" description="N6-acetyllysine" evidence="3">
    <location>
        <position position="16"/>
    </location>
</feature>
<feature type="modified residue" description="Phosphothreonine" evidence="5">
    <location>
        <position position="115"/>
    </location>
</feature>
<feature type="modified residue" description="Phosphoserine" evidence="3">
    <location>
        <position position="117"/>
    </location>
</feature>
<feature type="modified residue" description="Phosphoserine" evidence="4">
    <location>
        <position position="134"/>
    </location>
</feature>
<feature type="modified residue" description="Phosphothreonine" evidence="3">
    <location>
        <position position="185"/>
    </location>
</feature>
<feature type="modified residue" description="Phosphoserine" evidence="3">
    <location>
        <position position="206"/>
    </location>
</feature>
<feature type="modified residue" description="Phosphoserine" evidence="4">
    <location>
        <position position="213"/>
    </location>
</feature>
<feature type="modified residue" description="N6-acetyllysine" evidence="5">
    <location>
        <position position="349"/>
    </location>
</feature>
<feature type="modified residue" description="Phosphotyrosine" evidence="5">
    <location>
        <position position="353"/>
    </location>
</feature>
<feature type="modified residue" description="Phosphoserine" evidence="4">
    <location>
        <position position="369"/>
    </location>
</feature>
<feature type="modified residue" description="Phosphoserine" evidence="3">
    <location>
        <position position="378"/>
    </location>
</feature>
<feature type="modified residue" description="N6-succinyllysine" evidence="5">
    <location>
        <position position="419"/>
    </location>
</feature>
<feature type="modified residue" description="Phosphothreonine; by PAK1" evidence="3">
    <location>
        <position position="467"/>
    </location>
</feature>
<feature type="modified residue" description="Phosphoserine" evidence="4">
    <location>
        <position position="477"/>
    </location>
</feature>
<feature type="modified residue" description="Phosphoserine" evidence="4">
    <location>
        <position position="485"/>
    </location>
</feature>
<feature type="modified residue" description="Phosphoserine" evidence="3">
    <location>
        <position position="505"/>
    </location>
</feature>
<feature type="modified residue" description="Phosphothreonine" evidence="5">
    <location>
        <position position="507"/>
    </location>
</feature>
<feature type="modified residue" description="Phosphoserine" evidence="3">
    <location>
        <position position="509"/>
    </location>
</feature>
<feature type="modified residue" description="Phosphoserine" evidence="4">
    <location>
        <position position="541"/>
    </location>
</feature>
<sequence>MVKIVTVKTQAYPDQKPGTSGLRKRVKVFQSSANYAENFIQSIISTVEPAQRQEATLVVGGDGRFYMKEAIQLIARIAAANGIGRLVIGQNGILSTPAVSCIIRKIKAIGGIILTASHNPGGPNGDFGIKFNISNGGPAPEAITDKIFQISKTIEEYAICPDLKVDLGVLGKQQFDLENKFEPFTVEIVDSVEAYATMLRNIFDFSALKELLSGPNRLKIRIDAMHGVVGPYVKKILCEELGAPANSAVNCVPLEDFGGHHPDPNLTYAADLVETMKSGEHDFGAAFDGDGDRNMILGKHGFFVNPSDSVAVIAANIFSIPYFQQTGVRGFARSMPTSGALDRVANATKIALYETPTGWKFFGNLMDASKLSLCGEESFGTGSDHIREKDGLWAVLAWLSILATRKQSVEDILKDHWQKYGRNFFTRYDYEEVEAEGANKMMKDLEALMFDRSFVGKQFSANDKVYTVEKADNFEYSDPVDGSISRNQGLRLIFTDGSRIIFRLSGTGSAGATIRLYIDSYEKDVAKINQDPQVMLAPLISIALKVSQLQERTGRSAPTVIT</sequence>
<dbReference type="EC" id="5.4.2.2" evidence="3"/>
<dbReference type="EMBL" id="AB169600">
    <property type="protein sequence ID" value="BAE01681.1"/>
    <property type="molecule type" value="mRNA"/>
</dbReference>
<dbReference type="RefSeq" id="NP_001270226.1">
    <property type="nucleotide sequence ID" value="NM_001283297.1"/>
</dbReference>
<dbReference type="SMR" id="Q4R5E4"/>
<dbReference type="STRING" id="9541.ENSMFAP00000004171"/>
<dbReference type="eggNOG" id="KOG0625">
    <property type="taxonomic scope" value="Eukaryota"/>
</dbReference>
<dbReference type="Proteomes" id="UP000233100">
    <property type="component" value="Unplaced"/>
</dbReference>
<dbReference type="GO" id="GO:0005829">
    <property type="term" value="C:cytosol"/>
    <property type="evidence" value="ECO:0007669"/>
    <property type="project" value="TreeGrafter"/>
</dbReference>
<dbReference type="GO" id="GO:0000287">
    <property type="term" value="F:magnesium ion binding"/>
    <property type="evidence" value="ECO:0007669"/>
    <property type="project" value="InterPro"/>
</dbReference>
<dbReference type="GO" id="GO:0004614">
    <property type="term" value="F:phosphoglucomutase activity"/>
    <property type="evidence" value="ECO:0007669"/>
    <property type="project" value="UniProtKB-EC"/>
</dbReference>
<dbReference type="GO" id="GO:0006006">
    <property type="term" value="P:glucose metabolic process"/>
    <property type="evidence" value="ECO:0007669"/>
    <property type="project" value="UniProtKB-KW"/>
</dbReference>
<dbReference type="CDD" id="cd03085">
    <property type="entry name" value="PGM1"/>
    <property type="match status" value="1"/>
</dbReference>
<dbReference type="FunFam" id="3.30.310.50:FF:000002">
    <property type="entry name" value="Phosphoglucomutase 5"/>
    <property type="match status" value="1"/>
</dbReference>
<dbReference type="FunFam" id="3.40.120.10:FF:000004">
    <property type="entry name" value="Phosphoglucomutase 5"/>
    <property type="match status" value="1"/>
</dbReference>
<dbReference type="FunFam" id="3.40.120.10:FF:000005">
    <property type="entry name" value="Phosphoglucomutase 5"/>
    <property type="match status" value="1"/>
</dbReference>
<dbReference type="FunFam" id="3.40.120.10:FF:000007">
    <property type="entry name" value="Phosphoglucomutase 5"/>
    <property type="match status" value="1"/>
</dbReference>
<dbReference type="Gene3D" id="3.40.120.10">
    <property type="entry name" value="Alpha-D-Glucose-1,6-Bisphosphate, subunit A, domain 3"/>
    <property type="match status" value="3"/>
</dbReference>
<dbReference type="Gene3D" id="3.30.310.50">
    <property type="entry name" value="Alpha-D-phosphohexomutase, C-terminal domain"/>
    <property type="match status" value="1"/>
</dbReference>
<dbReference type="InterPro" id="IPR005844">
    <property type="entry name" value="A-D-PHexomutase_a/b/a-I"/>
</dbReference>
<dbReference type="InterPro" id="IPR016055">
    <property type="entry name" value="A-D-PHexomutase_a/b/a-I/II/III"/>
</dbReference>
<dbReference type="InterPro" id="IPR005845">
    <property type="entry name" value="A-D-PHexomutase_a/b/a-II"/>
</dbReference>
<dbReference type="InterPro" id="IPR005846">
    <property type="entry name" value="A-D-PHexomutase_a/b/a-III"/>
</dbReference>
<dbReference type="InterPro" id="IPR036900">
    <property type="entry name" value="A-D-PHexomutase_C_sf"/>
</dbReference>
<dbReference type="InterPro" id="IPR016066">
    <property type="entry name" value="A-D-PHexomutase_CS"/>
</dbReference>
<dbReference type="InterPro" id="IPR005841">
    <property type="entry name" value="Alpha-D-phosphohexomutase_SF"/>
</dbReference>
<dbReference type="InterPro" id="IPR045244">
    <property type="entry name" value="PGM"/>
</dbReference>
<dbReference type="NCBIfam" id="NF005737">
    <property type="entry name" value="PRK07564.1-1"/>
    <property type="match status" value="1"/>
</dbReference>
<dbReference type="PANTHER" id="PTHR22573:SF37">
    <property type="entry name" value="PHOSPHOGLUCOMUTASE-1"/>
    <property type="match status" value="1"/>
</dbReference>
<dbReference type="PANTHER" id="PTHR22573">
    <property type="entry name" value="PHOSPHOHEXOMUTASE FAMILY MEMBER"/>
    <property type="match status" value="1"/>
</dbReference>
<dbReference type="Pfam" id="PF24947">
    <property type="entry name" value="PGM1_C_vert_fung"/>
    <property type="match status" value="1"/>
</dbReference>
<dbReference type="Pfam" id="PF02878">
    <property type="entry name" value="PGM_PMM_I"/>
    <property type="match status" value="1"/>
</dbReference>
<dbReference type="Pfam" id="PF02879">
    <property type="entry name" value="PGM_PMM_II"/>
    <property type="match status" value="1"/>
</dbReference>
<dbReference type="Pfam" id="PF02880">
    <property type="entry name" value="PGM_PMM_III"/>
    <property type="match status" value="1"/>
</dbReference>
<dbReference type="PRINTS" id="PR00509">
    <property type="entry name" value="PGMPMM"/>
</dbReference>
<dbReference type="SUPFAM" id="SSF55957">
    <property type="entry name" value="Phosphoglucomutase, C-terminal domain"/>
    <property type="match status" value="1"/>
</dbReference>
<dbReference type="SUPFAM" id="SSF53738">
    <property type="entry name" value="Phosphoglucomutase, first 3 domains"/>
    <property type="match status" value="3"/>
</dbReference>
<dbReference type="PROSITE" id="PS00710">
    <property type="entry name" value="PGM_PMM"/>
    <property type="match status" value="1"/>
</dbReference>
<reference key="1">
    <citation type="submission" date="2005-06" db="EMBL/GenBank/DDBJ databases">
        <title>DNA sequences of macaque genes expressed in brain or testis and its evolutionary implications.</title>
        <authorList>
            <consortium name="International consortium for macaque cDNA sequencing and analysis"/>
        </authorList>
    </citation>
    <scope>NUCLEOTIDE SEQUENCE [LARGE SCALE MRNA]</scope>
    <source>
        <tissue>Parietal cortex</tissue>
    </source>
</reference>
<proteinExistence type="evidence at transcript level"/>
<keyword id="KW-0007">Acetylation</keyword>
<keyword id="KW-0119">Carbohydrate metabolism</keyword>
<keyword id="KW-0963">Cytoplasm</keyword>
<keyword id="KW-0313">Glucose metabolism</keyword>
<keyword id="KW-0413">Isomerase</keyword>
<keyword id="KW-0460">Magnesium</keyword>
<keyword id="KW-0479">Metal-binding</keyword>
<keyword id="KW-0597">Phosphoprotein</keyword>
<keyword id="KW-1185">Reference proteome</keyword>
<evidence type="ECO:0000250" key="1"/>
<evidence type="ECO:0000250" key="2">
    <source>
        <dbReference type="UniProtKB" id="P00949"/>
    </source>
</evidence>
<evidence type="ECO:0000250" key="3">
    <source>
        <dbReference type="UniProtKB" id="P36871"/>
    </source>
</evidence>
<evidence type="ECO:0000250" key="4">
    <source>
        <dbReference type="UniProtKB" id="P38652"/>
    </source>
</evidence>
<evidence type="ECO:0000250" key="5">
    <source>
        <dbReference type="UniProtKB" id="Q9D0F9"/>
    </source>
</evidence>
<evidence type="ECO:0000305" key="6"/>
<comment type="function">
    <text evidence="3">Catalyzes the reversible isomerization of alpha-D-glucose 1-phosphate to alpha-D-glucose 6-phosphate (By similarity). The mechanism proceeds via the intermediate compound alpha-D-glucose 1,6-bisphosphate (By similarity). This enzyme participates in both the breakdown and synthesis of glucose (By similarity).</text>
</comment>
<comment type="catalytic activity">
    <reaction evidence="3">
        <text>alpha-D-glucose 1-phosphate = alpha-D-glucose 6-phosphate</text>
        <dbReference type="Rhea" id="RHEA:23536"/>
        <dbReference type="ChEBI" id="CHEBI:58225"/>
        <dbReference type="ChEBI" id="CHEBI:58601"/>
        <dbReference type="EC" id="5.4.2.2"/>
    </reaction>
</comment>
<comment type="catalytic activity">
    <reaction evidence="3">
        <text>O-phospho-L-seryl-[protein] + alpha-D-glucose 1-phosphate = alpha-D-glucose 1,6-bisphosphate + L-seryl-[protein]</text>
        <dbReference type="Rhea" id="RHEA:68748"/>
        <dbReference type="Rhea" id="RHEA-COMP:9863"/>
        <dbReference type="Rhea" id="RHEA-COMP:11604"/>
        <dbReference type="ChEBI" id="CHEBI:29999"/>
        <dbReference type="ChEBI" id="CHEBI:58392"/>
        <dbReference type="ChEBI" id="CHEBI:58601"/>
        <dbReference type="ChEBI" id="CHEBI:83421"/>
    </reaction>
</comment>
<comment type="catalytic activity">
    <reaction evidence="3">
        <text>alpha-D-glucose 1,6-bisphosphate + L-seryl-[protein] = O-phospho-L-seryl-[protein] + alpha-D-glucose 6-phosphate</text>
        <dbReference type="Rhea" id="RHEA:68752"/>
        <dbReference type="Rhea" id="RHEA-COMP:9863"/>
        <dbReference type="Rhea" id="RHEA-COMP:11604"/>
        <dbReference type="ChEBI" id="CHEBI:29999"/>
        <dbReference type="ChEBI" id="CHEBI:58225"/>
        <dbReference type="ChEBI" id="CHEBI:58392"/>
        <dbReference type="ChEBI" id="CHEBI:83421"/>
    </reaction>
</comment>
<comment type="cofactor">
    <cofactor evidence="2">
        <name>Mg(2+)</name>
        <dbReference type="ChEBI" id="CHEBI:18420"/>
    </cofactor>
    <text evidence="2">Binds 1 Mg(2+) ion per subunit.</text>
</comment>
<comment type="subunit">
    <text evidence="2">Monomer.</text>
</comment>
<comment type="subcellular location">
    <subcellularLocation>
        <location evidence="1">Cytoplasm</location>
    </subcellularLocation>
</comment>
<comment type="PTM">
    <text evidence="3">Phosphorylation at Thr-467 by PAK1 significantly enhances enzymatic activity.</text>
</comment>
<comment type="similarity">
    <text evidence="6">Belongs to the phosphohexose mutase family.</text>
</comment>
<protein>
    <recommendedName>
        <fullName>Phosphoglucomutase-1</fullName>
        <shortName>PGM 1</shortName>
        <ecNumber evidence="3">5.4.2.2</ecNumber>
    </recommendedName>
    <alternativeName>
        <fullName>Glucose phosphomutase 1</fullName>
    </alternativeName>
</protein>
<gene>
    <name type="primary">PGM1</name>
    <name type="ORF">QnpA-16101</name>
</gene>
<organism>
    <name type="scientific">Macaca fascicularis</name>
    <name type="common">Crab-eating macaque</name>
    <name type="synonym">Cynomolgus monkey</name>
    <dbReference type="NCBI Taxonomy" id="9541"/>
    <lineage>
        <taxon>Eukaryota</taxon>
        <taxon>Metazoa</taxon>
        <taxon>Chordata</taxon>
        <taxon>Craniata</taxon>
        <taxon>Vertebrata</taxon>
        <taxon>Euteleostomi</taxon>
        <taxon>Mammalia</taxon>
        <taxon>Eutheria</taxon>
        <taxon>Euarchontoglires</taxon>
        <taxon>Primates</taxon>
        <taxon>Haplorrhini</taxon>
        <taxon>Catarrhini</taxon>
        <taxon>Cercopithecidae</taxon>
        <taxon>Cercopithecinae</taxon>
        <taxon>Macaca</taxon>
    </lineage>
</organism>